<sequence length="393" mass="44576">MNSSCKTRVFNIISIIMVSMLILSLGAFANNNKAKADSHSKQLEINVKSDKVPQKVKDLAQQQFAGYAKALDKQSNAKTGKYELGEAFKIYKFNGEEDNSYYYPVIKDGKIVYTLTLSPKNKDDLNKSKEDMNYSVKISNFIAKDLDQIKDKNSNITVLTDEKGFYFEEDGKVRLVKATPLANNIKEKESAKTVSPQLKQELKTTVTPTKVEENEAIQEDQVQYENTLKNFKIREQQFDNSWCAGFSMAALLNATKNTDTYNAHDIMRTLYPEVSEQDLPNCATFPNQMIEYGKSQGRDIHYQEGVPSYNQVDQLTKDNVGIMILAQSVSQNPNDPHLGHALAVVGNAKINDQEKLIYWNPWDTELSIQDADSSLLHLSFNRDYNWYGSMIGY</sequence>
<proteinExistence type="evidence at protein level"/>
<protein>
    <recommendedName>
        <fullName>Staphopain B</fullName>
        <ecNumber>3.4.22.-</ecNumber>
    </recommendedName>
    <alternativeName>
        <fullName>Staphylococcal cysteine proteinase B</fullName>
    </alternativeName>
    <alternativeName>
        <fullName>Staphylopain B</fullName>
    </alternativeName>
</protein>
<feature type="signal peptide">
    <location>
        <begin position="1"/>
        <end position="36"/>
    </location>
</feature>
<feature type="propeptide" id="PRO_0000026559" evidence="1">
    <location>
        <begin position="37"/>
        <end position="219"/>
    </location>
</feature>
<feature type="chain" id="PRO_0000026560" description="Staphopain B">
    <location>
        <begin position="220"/>
        <end position="393"/>
    </location>
</feature>
<feature type="active site" evidence="3">
    <location>
        <position position="243"/>
    </location>
</feature>
<feature type="active site" evidence="3">
    <location>
        <position position="340"/>
    </location>
</feature>
<feature type="active site" evidence="3">
    <location>
        <position position="360"/>
    </location>
</feature>
<feature type="site" description="Cleavage; by SspA" evidence="1">
    <location>
        <begin position="219"/>
        <end position="220"/>
    </location>
</feature>
<feature type="mutagenesis site" description="Complete loss of effect on human neutrophils death." evidence="5">
    <original>C</original>
    <variation>A</variation>
    <location>
        <position position="243"/>
    </location>
</feature>
<feature type="sequence conflict" description="In Ref. 1; CAD61964." evidence="7" ref="1">
    <original>C</original>
    <variation>Y</variation>
    <location>
        <position position="5"/>
    </location>
</feature>
<feature type="sequence conflict" description="In Ref. 1; CAD61964." evidence="7" ref="1">
    <original>T</original>
    <variation>S</variation>
    <location>
        <position position="7"/>
    </location>
</feature>
<feature type="sequence conflict" description="In Ref. 1; CAD61964." evidence="7" ref="1">
    <original>ANNI</original>
    <variation>PGNV</variation>
    <location>
        <begin position="182"/>
        <end position="185"/>
    </location>
</feature>
<feature type="sequence conflict" description="In Ref. 1; CAD61964." evidence="7" ref="1">
    <original>PQ</original>
    <variation>SK</variation>
    <location>
        <begin position="196"/>
        <end position="197"/>
    </location>
</feature>
<feature type="sequence conflict" description="In Ref. 1; CAD61964." evidence="7" ref="1">
    <original>T</original>
    <variation>N</variation>
    <location>
        <position position="204"/>
    </location>
</feature>
<feature type="sequence conflict" description="In Ref. 1; CAD61964." evidence="7" ref="1">
    <original>A</original>
    <variation>S</variation>
    <location>
        <position position="283"/>
    </location>
</feature>
<feature type="sequence conflict" description="In Ref. 1; CAD61964." evidence="7" ref="1">
    <original>N</original>
    <variation>E</variation>
    <location>
        <position position="310"/>
    </location>
</feature>
<feature type="strand" evidence="9">
    <location>
        <begin position="44"/>
        <end position="48"/>
    </location>
</feature>
<feature type="helix" evidence="9">
    <location>
        <begin position="54"/>
        <end position="74"/>
    </location>
</feature>
<feature type="strand" evidence="9">
    <location>
        <begin position="82"/>
        <end position="84"/>
    </location>
</feature>
<feature type="strand" evidence="9">
    <location>
        <begin position="99"/>
        <end position="107"/>
    </location>
</feature>
<feature type="strand" evidence="9">
    <location>
        <begin position="110"/>
        <end position="119"/>
    </location>
</feature>
<feature type="helix" evidence="9">
    <location>
        <begin position="122"/>
        <end position="126"/>
    </location>
</feature>
<feature type="turn" evidence="9">
    <location>
        <begin position="129"/>
        <end position="131"/>
    </location>
</feature>
<feature type="strand" evidence="9">
    <location>
        <begin position="134"/>
        <end position="139"/>
    </location>
</feature>
<feature type="helix" evidence="9">
    <location>
        <begin position="143"/>
        <end position="148"/>
    </location>
</feature>
<feature type="strand" evidence="9">
    <location>
        <begin position="150"/>
        <end position="153"/>
    </location>
</feature>
<feature type="strand" evidence="9">
    <location>
        <begin position="155"/>
        <end position="161"/>
    </location>
</feature>
<feature type="strand" evidence="9">
    <location>
        <begin position="164"/>
        <end position="169"/>
    </location>
</feature>
<feature type="strand" evidence="9">
    <location>
        <begin position="172"/>
        <end position="178"/>
    </location>
</feature>
<feature type="turn" evidence="9">
    <location>
        <begin position="182"/>
        <end position="186"/>
    </location>
</feature>
<feature type="helix" evidence="9">
    <location>
        <begin position="196"/>
        <end position="201"/>
    </location>
</feature>
<feature type="strand" evidence="9">
    <location>
        <begin position="204"/>
        <end position="206"/>
    </location>
</feature>
<feature type="strand" evidence="8">
    <location>
        <begin position="222"/>
        <end position="227"/>
    </location>
</feature>
<feature type="strand" evidence="8">
    <location>
        <begin position="239"/>
        <end position="241"/>
    </location>
</feature>
<feature type="helix" evidence="8">
    <location>
        <begin position="243"/>
        <end position="256"/>
    </location>
</feature>
<feature type="helix" evidence="8">
    <location>
        <begin position="263"/>
        <end position="270"/>
    </location>
</feature>
<feature type="turn" evidence="8">
    <location>
        <begin position="276"/>
        <end position="278"/>
    </location>
</feature>
<feature type="helix" evidence="8">
    <location>
        <begin position="279"/>
        <end position="281"/>
    </location>
</feature>
<feature type="helix" evidence="8">
    <location>
        <begin position="286"/>
        <end position="295"/>
    </location>
</feature>
<feature type="strand" evidence="8">
    <location>
        <begin position="301"/>
        <end position="305"/>
    </location>
</feature>
<feature type="helix" evidence="8">
    <location>
        <begin position="309"/>
        <end position="317"/>
    </location>
</feature>
<feature type="strand" evidence="8">
    <location>
        <begin position="322"/>
        <end position="327"/>
    </location>
</feature>
<feature type="strand" evidence="9">
    <location>
        <begin position="333"/>
        <end position="335"/>
    </location>
</feature>
<feature type="strand" evidence="8">
    <location>
        <begin position="339"/>
        <end position="350"/>
    </location>
</feature>
<feature type="strand" evidence="8">
    <location>
        <begin position="353"/>
        <end position="359"/>
    </location>
</feature>
<feature type="strand" evidence="8">
    <location>
        <begin position="367"/>
        <end position="370"/>
    </location>
</feature>
<feature type="strand" evidence="8">
    <location>
        <begin position="375"/>
        <end position="378"/>
    </location>
</feature>
<feature type="helix" evidence="8">
    <location>
        <begin position="379"/>
        <end position="381"/>
    </location>
</feature>
<feature type="strand" evidence="8">
    <location>
        <begin position="382"/>
        <end position="391"/>
    </location>
</feature>
<dbReference type="EC" id="3.4.22.-"/>
<dbReference type="EMBL" id="AJ538363">
    <property type="protein sequence ID" value="CAD61963.1"/>
    <property type="molecule type" value="Genomic_DNA"/>
</dbReference>
<dbReference type="EMBL" id="AJ538364">
    <property type="protein sequence ID" value="CAD61964.1"/>
    <property type="molecule type" value="Genomic_DNA"/>
</dbReference>
<dbReference type="RefSeq" id="WP_001088793.1">
    <property type="nucleotide sequence ID" value="NZ_WKHI01000007.1"/>
</dbReference>
<dbReference type="PDB" id="1PXV">
    <property type="method" value="X-ray"/>
    <property type="resolution" value="1.80 A"/>
    <property type="chains" value="A/B=220-393"/>
</dbReference>
<dbReference type="PDB" id="1X9Y">
    <property type="method" value="X-ray"/>
    <property type="resolution" value="2.50 A"/>
    <property type="chains" value="A/B/C/D=37-393"/>
</dbReference>
<dbReference type="PDB" id="1Y4H">
    <property type="method" value="X-ray"/>
    <property type="resolution" value="1.93 A"/>
    <property type="chains" value="A/B=220-393"/>
</dbReference>
<dbReference type="PDBsum" id="1PXV"/>
<dbReference type="PDBsum" id="1X9Y"/>
<dbReference type="PDBsum" id="1Y4H"/>
<dbReference type="SMR" id="P0C1S6"/>
<dbReference type="MEROPS" id="C47.002"/>
<dbReference type="BRENDA" id="3.4.22.48">
    <property type="organism ID" value="3352"/>
</dbReference>
<dbReference type="EvolutionaryTrace" id="P0C1S6"/>
<dbReference type="PHI-base" id="PHI:11915"/>
<dbReference type="GO" id="GO:0005576">
    <property type="term" value="C:extracellular region"/>
    <property type="evidence" value="ECO:0007669"/>
    <property type="project" value="UniProtKB-SubCell"/>
</dbReference>
<dbReference type="GO" id="GO:0008234">
    <property type="term" value="F:cysteine-type peptidase activity"/>
    <property type="evidence" value="ECO:0007669"/>
    <property type="project" value="UniProtKB-KW"/>
</dbReference>
<dbReference type="GO" id="GO:0006508">
    <property type="term" value="P:proteolysis"/>
    <property type="evidence" value="ECO:0007669"/>
    <property type="project" value="UniProtKB-KW"/>
</dbReference>
<dbReference type="Gene3D" id="3.90.70.10">
    <property type="entry name" value="Cysteine proteinases"/>
    <property type="match status" value="1"/>
</dbReference>
<dbReference type="Gene3D" id="3.10.500.10">
    <property type="entry name" value="Staphopain proregion domain"/>
    <property type="match status" value="1"/>
</dbReference>
<dbReference type="InterPro" id="IPR046350">
    <property type="entry name" value="Cystatin_sf"/>
</dbReference>
<dbReference type="InterPro" id="IPR038765">
    <property type="entry name" value="Papain-like_cys_pep_sf"/>
</dbReference>
<dbReference type="InterPro" id="IPR025660">
    <property type="entry name" value="Pept_his_AS"/>
</dbReference>
<dbReference type="InterPro" id="IPR008750">
    <property type="entry name" value="Peptidase_C47"/>
</dbReference>
<dbReference type="InterPro" id="IPR028076">
    <property type="entry name" value="Staphopain_pro"/>
</dbReference>
<dbReference type="InterPro" id="IPR037155">
    <property type="entry name" value="Staphopain_pro_sf"/>
</dbReference>
<dbReference type="Pfam" id="PF05543">
    <property type="entry name" value="Peptidase_C47"/>
    <property type="match status" value="1"/>
</dbReference>
<dbReference type="Pfam" id="PF14731">
    <property type="entry name" value="Staphopain_pro"/>
    <property type="match status" value="1"/>
</dbReference>
<dbReference type="SUPFAM" id="SSF54403">
    <property type="entry name" value="Cystatin/monellin"/>
    <property type="match status" value="1"/>
</dbReference>
<dbReference type="SUPFAM" id="SSF54001">
    <property type="entry name" value="Cysteine proteinases"/>
    <property type="match status" value="1"/>
</dbReference>
<dbReference type="PROSITE" id="PS00639">
    <property type="entry name" value="THIOL_PROTEASE_HIS"/>
    <property type="match status" value="1"/>
</dbReference>
<gene>
    <name type="primary">sspB</name>
</gene>
<keyword id="KW-0002">3D-structure</keyword>
<keyword id="KW-0378">Hydrolase</keyword>
<keyword id="KW-0645">Protease</keyword>
<keyword id="KW-0964">Secreted</keyword>
<keyword id="KW-0732">Signal</keyword>
<keyword id="KW-0788">Thiol protease</keyword>
<keyword id="KW-0843">Virulence</keyword>
<keyword id="KW-0865">Zymogen</keyword>
<name>SSPB_STAAU</name>
<evidence type="ECO:0000250" key="1"/>
<evidence type="ECO:0000269" key="2">
    <source>
    </source>
</evidence>
<evidence type="ECO:0000269" key="3">
    <source>
    </source>
</evidence>
<evidence type="ECO:0000269" key="4">
    <source>
    </source>
</evidence>
<evidence type="ECO:0000269" key="5">
    <source>
    </source>
</evidence>
<evidence type="ECO:0000269" key="6">
    <source>
    </source>
</evidence>
<evidence type="ECO:0000305" key="7"/>
<evidence type="ECO:0007829" key="8">
    <source>
        <dbReference type="PDB" id="1PXV"/>
    </source>
</evidence>
<evidence type="ECO:0007829" key="9">
    <source>
        <dbReference type="PDB" id="1X9Y"/>
    </source>
</evidence>
<accession>P0C1S6</accession>
<accession>Q70UQ8</accession>
<accession>Q70UQ9</accession>
<accession>Q9EYW7</accession>
<reference key="1">
    <citation type="journal article" date="2004" name="Biol. Chem.">
        <title>Genetic characterization of staphopain genes in Staphylococcus aureus.</title>
        <authorList>
            <person name="Golonka E."/>
            <person name="Filipek R."/>
            <person name="Sabat A."/>
            <person name="Sinczak A."/>
            <person name="Potempa J."/>
        </authorList>
    </citation>
    <scope>NUCLEOTIDE SEQUENCE [GENOMIC DNA]</scope>
    <source>
        <strain>ATCC 27733 / V8</strain>
        <strain>MSSA150</strain>
    </source>
</reference>
<reference key="2">
    <citation type="journal article" date="2003" name="Mol. Microbiol.">
        <title>Staphostatins: an expanding new group of proteinase inhibitors with a unique specificity for the regulation of staphopains, Staphylococcus spp. cysteine proteinases.</title>
        <authorList>
            <person name="Rzychon M."/>
            <person name="Sabat A."/>
            <person name="Kosowska K."/>
            <person name="Potempa J."/>
            <person name="Dubin A."/>
        </authorList>
    </citation>
    <scope>INTERACTION WITH STAPHOSTATIN B</scope>
    <source>
        <strain>ATCC 27733 / V8</strain>
    </source>
</reference>
<reference key="3">
    <citation type="journal article" date="2009" name="J. Innate Immun.">
        <title>A new pathway of staphylococcal pathogenesis: apoptosis-like death induced by Staphopain B in human neutrophils and monocytes.</title>
        <authorList>
            <person name="Smagur J."/>
            <person name="Guzik K."/>
            <person name="Magiera L."/>
            <person name="Bzowska M."/>
            <person name="Gruca M."/>
            <person name="Thoegersen I.B."/>
            <person name="Enghild J.J."/>
            <person name="Potempa J."/>
        </authorList>
    </citation>
    <scope>FUNCTION</scope>
    <scope>MUTAGENESIS OF CYS-243</scope>
</reference>
<reference key="4">
    <citation type="journal article" date="2009" name="Biol. Chem.">
        <title>Staphylococcal cysteine protease staphopain B (SspB) induces rapid engulfment of human neutrophils and monocytes by macrophages.</title>
        <authorList>
            <person name="Smagur J."/>
            <person name="Guzik K."/>
            <person name="Bzowska M."/>
            <person name="Kuzak M."/>
            <person name="Zarebski M."/>
            <person name="Kantyka T."/>
            <person name="Walski M."/>
            <person name="Gajkowska B."/>
            <person name="Potempa J."/>
        </authorList>
    </citation>
    <scope>FUNCTION</scope>
</reference>
<reference key="5">
    <citation type="journal article" date="2017" name="Infect. Immun.">
        <title>Galectin-3 Is a Target for Proteases Involved in the Virulence of Staphylococcus aureus.</title>
        <authorList>
            <person name="Elmwall J."/>
            <person name="Kwiecinski J."/>
            <person name="Na M."/>
            <person name="Ali A.A."/>
            <person name="Osla V."/>
            <person name="Shaw L.N."/>
            <person name="Wang W."/>
            <person name="Saevman K."/>
            <person name="Josefsson E."/>
            <person name="Bylund J."/>
            <person name="Jin T."/>
            <person name="Welin A."/>
            <person name="Karlsson A."/>
        </authorList>
    </citation>
    <scope>FUNCTION</scope>
</reference>
<reference key="6">
    <citation type="journal article" date="2003" name="J. Biol. Chem.">
        <title>The staphostatin-staphopain complex: a forward binding inhibitor in complex with its target cysteine protease.</title>
        <authorList>
            <person name="Filipek R."/>
            <person name="Rzychon M."/>
            <person name="Oleksy A."/>
            <person name="Gruca M."/>
            <person name="Dubin A."/>
            <person name="Potempa J."/>
            <person name="Bochtler M."/>
        </authorList>
    </citation>
    <scope>X-RAY CRYSTALLOGRAPHY (1.8 ANGSTROMS) OF 220-393 IN COMPLEX WITH STAPHOSTATIN B</scope>
</reference>
<reference key="7">
    <citation type="journal article" date="2004" name="Biochemistry">
        <title>Prostaphopain B structure: a comparison of proregion-mediated and staphostatin-mediated protease inhibition.</title>
        <authorList>
            <person name="Filipek R."/>
            <person name="Szczepanowski R."/>
            <person name="Sabat A."/>
            <person name="Potempa J."/>
            <person name="Bochtler M."/>
        </authorList>
    </citation>
    <scope>X-RAY CRYSTALLOGRAPHY (2.5 ANGSTROMS) OF 37-393</scope>
</reference>
<reference key="8">
    <citation type="journal article" date="2005" name="J. Biol. Chem.">
        <title>A comparison of staphostatin B with standard mechanism serine protease inhibitors.</title>
        <authorList>
            <person name="Filipek R."/>
            <person name="Potempa J."/>
            <person name="Bochtler M."/>
        </authorList>
    </citation>
    <scope>X-RAY CRYSTALLOGRAPHY (1.93 ANGSTROMS)</scope>
    <scope>ACTIVE SITE</scope>
</reference>
<organism>
    <name type="scientific">Staphylococcus aureus</name>
    <dbReference type="NCBI Taxonomy" id="1280"/>
    <lineage>
        <taxon>Bacteria</taxon>
        <taxon>Bacillati</taxon>
        <taxon>Bacillota</taxon>
        <taxon>Bacilli</taxon>
        <taxon>Bacillales</taxon>
        <taxon>Staphylococcaceae</taxon>
        <taxon>Staphylococcus</taxon>
    </lineage>
</organism>
<comment type="function">
    <text evidence="4 5 6">Cysteine protease that plays an important role in the inhibition of host innate immune response. Degrades host elastin, fibrogen, fibronectin and kininogen. Blocks phagocytosis of opsonised S.aureus by neutrophils and monocytes by inducing their death in a proteolytic activity-dependent manner (PubMed:19284294, PubMed:20375568). Decreases surface expression of the 'don't eat me' signal CD31 on neutrophils (PubMed:19284294). Cleaves host galectin-3/LGALS3, thereby inhibiting the neutrophil-activating ability of the lectin (PubMed:28438975).</text>
</comment>
<comment type="activity regulation">
    <text evidence="1">Prematurely activated/folded staphopain B is inhibited by staphostatin B (SspC), which is probably required to protect staphylococcal cytoplasmic proteins from degradation by SspB.</text>
</comment>
<comment type="subunit">
    <text evidence="2">In the cytoplasm, prematurely activated/folded SspB forms a stable non-covalent complex with SspC.</text>
</comment>
<comment type="subcellular location">
    <subcellularLocation>
        <location evidence="1">Secreted</location>
    </subcellularLocation>
</comment>
<comment type="PTM">
    <text evidence="1">Proteolytically cleaved by staphylococcal serine protease (SspA).</text>
</comment>
<comment type="miscellaneous">
    <text evidence="1">The cascade of activation of extracellular proteases proceeds from the metalloprotease aureolysin (aur), through SspA to SspB.</text>
</comment>
<comment type="similarity">
    <text evidence="7">Belongs to the peptidase C47 family.</text>
</comment>